<gene>
    <name evidence="8" type="primary">hsdR</name>
    <name type="synonym">hsr</name>
</gene>
<proteinExistence type="evidence at protein level"/>
<dbReference type="EC" id="3.1.21.3" evidence="5"/>
<dbReference type="EMBL" id="X13145">
    <property type="protein sequence ID" value="CAA31543.1"/>
    <property type="molecule type" value="Genomic_DNA"/>
</dbReference>
<dbReference type="EMBL" id="DQ249872">
    <property type="protein sequence ID" value="ABB51560.1"/>
    <property type="molecule type" value="Genomic_DNA"/>
</dbReference>
<dbReference type="PIR" id="S02168">
    <property type="entry name" value="S02168"/>
</dbReference>
<dbReference type="RefSeq" id="WP_032491608.1">
    <property type="nucleotide sequence ID" value="NZ_LR882053.1"/>
</dbReference>
<dbReference type="PDB" id="2W00">
    <property type="method" value="X-ray"/>
    <property type="resolution" value="2.60 A"/>
    <property type="chains" value="A/B=1-1032"/>
</dbReference>
<dbReference type="PDB" id="4BE7">
    <property type="method" value="X-ray"/>
    <property type="resolution" value="2.74 A"/>
    <property type="chains" value="B/D=1-1032"/>
</dbReference>
<dbReference type="PDB" id="4BEB">
    <property type="method" value="X-ray"/>
    <property type="resolution" value="2.99 A"/>
    <property type="chains" value="A/B/C/D=1-1032"/>
</dbReference>
<dbReference type="PDB" id="4BEC">
    <property type="method" value="X-ray"/>
    <property type="resolution" value="2.84 A"/>
    <property type="chains" value="A/B=1-1032"/>
</dbReference>
<dbReference type="PDB" id="4XJX">
    <property type="method" value="X-ray"/>
    <property type="resolution" value="2.40 A"/>
    <property type="chains" value="A/B=1-1032"/>
</dbReference>
<dbReference type="PDB" id="5J3N">
    <property type="method" value="X-ray"/>
    <property type="resolution" value="2.45 A"/>
    <property type="chains" value="A/B=887-1032"/>
</dbReference>
<dbReference type="PDB" id="6H2J">
    <property type="method" value="X-ray"/>
    <property type="resolution" value="2.60 A"/>
    <property type="chains" value="A/B=1-1032"/>
</dbReference>
<dbReference type="PDB" id="7BST">
    <property type="method" value="EM"/>
    <property type="resolution" value="4.37 A"/>
    <property type="chains" value="B/C=1-1032"/>
</dbReference>
<dbReference type="PDB" id="7BTO">
    <property type="method" value="EM"/>
    <property type="resolution" value="3.97 A"/>
    <property type="chains" value="C/F/G/H=1-1032"/>
</dbReference>
<dbReference type="PDB" id="7BTP">
    <property type="method" value="EM"/>
    <property type="resolution" value="4.01 A"/>
    <property type="chains" value="A=1-1032"/>
</dbReference>
<dbReference type="PDB" id="7BTQ">
    <property type="method" value="EM"/>
    <property type="resolution" value="4.54 A"/>
    <property type="chains" value="F=1-1032"/>
</dbReference>
<dbReference type="PDB" id="7BTR">
    <property type="method" value="EM"/>
    <property type="resolution" value="4.54 A"/>
    <property type="chains" value="C=1-1032"/>
</dbReference>
<dbReference type="PDBsum" id="2W00"/>
<dbReference type="PDBsum" id="4BE7"/>
<dbReference type="PDBsum" id="4BEB"/>
<dbReference type="PDBsum" id="4BEC"/>
<dbReference type="PDBsum" id="4XJX"/>
<dbReference type="PDBsum" id="5J3N"/>
<dbReference type="PDBsum" id="6H2J"/>
<dbReference type="PDBsum" id="7BST"/>
<dbReference type="PDBsum" id="7BTO"/>
<dbReference type="PDBsum" id="7BTP"/>
<dbReference type="PDBsum" id="7BTQ"/>
<dbReference type="PDBsum" id="7BTR"/>
<dbReference type="EMDB" id="EMD-30166"/>
<dbReference type="EMDB" id="EMD-30180"/>
<dbReference type="EMDB" id="EMD-30181"/>
<dbReference type="EMDB" id="EMD-30182"/>
<dbReference type="EMDB" id="EMD-30183"/>
<dbReference type="SMR" id="P10486"/>
<dbReference type="DIP" id="DIP-17005N"/>
<dbReference type="REBASE" id="391271">
    <property type="entry name" value="Eco6193ORF160P"/>
</dbReference>
<dbReference type="REBASE" id="989">
    <property type="entry name" value="EcoR124II"/>
</dbReference>
<dbReference type="BRENDA" id="3.1.21.3">
    <property type="organism ID" value="2026"/>
</dbReference>
<dbReference type="EvolutionaryTrace" id="P10486"/>
<dbReference type="PRO" id="PR:P10486"/>
<dbReference type="GO" id="GO:0005524">
    <property type="term" value="F:ATP binding"/>
    <property type="evidence" value="ECO:0007669"/>
    <property type="project" value="UniProtKB-KW"/>
</dbReference>
<dbReference type="GO" id="GO:0003677">
    <property type="term" value="F:DNA binding"/>
    <property type="evidence" value="ECO:0007669"/>
    <property type="project" value="UniProtKB-KW"/>
</dbReference>
<dbReference type="GO" id="GO:0009035">
    <property type="term" value="F:type I site-specific deoxyribonuclease activity"/>
    <property type="evidence" value="ECO:0007669"/>
    <property type="project" value="UniProtKB-EC"/>
</dbReference>
<dbReference type="GO" id="GO:0009307">
    <property type="term" value="P:DNA restriction-modification system"/>
    <property type="evidence" value="ECO:0007669"/>
    <property type="project" value="UniProtKB-KW"/>
</dbReference>
<dbReference type="CDD" id="cd18030">
    <property type="entry name" value="DEXHc_RE_I_HsdR"/>
    <property type="match status" value="1"/>
</dbReference>
<dbReference type="CDD" id="cd22332">
    <property type="entry name" value="HsdR_N"/>
    <property type="match status" value="1"/>
</dbReference>
<dbReference type="CDD" id="cd18800">
    <property type="entry name" value="SF2_C_EcoR124I-like"/>
    <property type="match status" value="1"/>
</dbReference>
<dbReference type="Gene3D" id="1.10.10.2110">
    <property type="match status" value="1"/>
</dbReference>
<dbReference type="Gene3D" id="1.20.58.2040">
    <property type="match status" value="1"/>
</dbReference>
<dbReference type="Gene3D" id="3.90.1570.50">
    <property type="match status" value="2"/>
</dbReference>
<dbReference type="Gene3D" id="3.40.50.300">
    <property type="entry name" value="P-loop containing nucleotide triphosphate hydrolases"/>
    <property type="match status" value="2"/>
</dbReference>
<dbReference type="InterPro" id="IPR014001">
    <property type="entry name" value="Helicase_ATP-bd"/>
</dbReference>
<dbReference type="InterPro" id="IPR055180">
    <property type="entry name" value="HsdR_RecA-like_helicase_dom_2"/>
</dbReference>
<dbReference type="InterPro" id="IPR027417">
    <property type="entry name" value="P-loop_NTPase"/>
</dbReference>
<dbReference type="InterPro" id="IPR007409">
    <property type="entry name" value="Restrct_endonuc_type1_HsdR_N"/>
</dbReference>
<dbReference type="InterPro" id="IPR004473">
    <property type="entry name" value="Restrct_endonuc_typeI_HsdR"/>
</dbReference>
<dbReference type="InterPro" id="IPR040980">
    <property type="entry name" value="SWI2_SNF2"/>
</dbReference>
<dbReference type="InterPro" id="IPR051268">
    <property type="entry name" value="Type-I_R_enzyme_R_subunit"/>
</dbReference>
<dbReference type="InterPro" id="IPR022625">
    <property type="entry name" value="TypeI_RM_Rsu_C"/>
</dbReference>
<dbReference type="NCBIfam" id="TIGR00348">
    <property type="entry name" value="hsdR"/>
    <property type="match status" value="1"/>
</dbReference>
<dbReference type="PANTHER" id="PTHR30195:SF16">
    <property type="entry name" value="TYPE I RESTRICTION ENZYME ENDONUCLEASE SUBUNIT"/>
    <property type="match status" value="1"/>
</dbReference>
<dbReference type="PANTHER" id="PTHR30195">
    <property type="entry name" value="TYPE I SITE-SPECIFIC DEOXYRIBONUCLEASE PROTEIN SUBUNIT M AND R"/>
    <property type="match status" value="1"/>
</dbReference>
<dbReference type="Pfam" id="PF12008">
    <property type="entry name" value="EcoR124_C"/>
    <property type="match status" value="1"/>
</dbReference>
<dbReference type="Pfam" id="PF04313">
    <property type="entry name" value="HSDR_N"/>
    <property type="match status" value="1"/>
</dbReference>
<dbReference type="Pfam" id="PF18766">
    <property type="entry name" value="SWI2_SNF2"/>
    <property type="match status" value="1"/>
</dbReference>
<dbReference type="Pfam" id="PF22679">
    <property type="entry name" value="T1R_D3-like"/>
    <property type="match status" value="1"/>
</dbReference>
<dbReference type="SMART" id="SM00487">
    <property type="entry name" value="DEXDc"/>
    <property type="match status" value="1"/>
</dbReference>
<dbReference type="SUPFAM" id="SSF52540">
    <property type="entry name" value="P-loop containing nucleoside triphosphate hydrolases"/>
    <property type="match status" value="1"/>
</dbReference>
<dbReference type="PROSITE" id="PS51192">
    <property type="entry name" value="HELICASE_ATP_BIND_1"/>
    <property type="match status" value="1"/>
</dbReference>
<sequence length="1038" mass="120120">MTHQTHTIAESNNFIVLDKYIKAEPTGDSYQSESDLERELIQDLRNQGYEFISVKSQSAMLANVREQLQNLNGVVFNDSEWRRFTEQYLDNPSDGILDKTRKIHIDYICDFIFDDERLENIYLIDKKNLMRNKVQIIQQFEQAGSHANRYDVTILVNGLPLVQIELKKRGVAIREAFNQIHRYSKESFNSENSLFKYLQLFVISNGTDTRYFANTTKRDKNSFDFTMNWAKSDNTLIKDLKDFTATCFQKHTLLNVLVNYSVFDSSQTLLVMRPYQIAATERILWKIKSSFTAKNWSKPESGGYIWHTTGSGKTLTSFKAARLATELDFIDKVFFVVDRKDLDYQTMKEYQRFSPDSVNGSENTAGLKRNLDKDDNKIIVTTIQKLNNLMKAESDLPVYNQQVVFIFDECHRSQFGEAQKNLKKKFKRYYQFGFTGTPIFPENALGSETTASVFGRELHSYVITDAIRDEKVLKFKVDYNDVRPQFKSLETETDEKKLSAAENQQAFLHPMRIQEITQYILNNFRQKTHRTFPGSKGFNAMLAVSSVDAAKAYYATFKRLQEEAANKSATYKPLRIATIFSFAANEEQNAIGEISDETFDTSAMDSSAKEFLDAAIREYNSHFKTNFSTDSNGFQNYYRDLAQRVKNQDIDLLIVVGMFLTGFDAPTLNTLFVDKNLRYHGLMQAFSRTNRIYDATKTFGNIVTFRDLERSTIDAITLFGDKNTKNVVLEKSYTEYMEGFTDAATGEAKRGFMTVVSELEQRFPDPTSIESEKEKKDFVKLFGEYLRAENILQNYDEFATLKALQQIDLSDPVAVEKFKAEHYVDDEKFAELQTIRLPADRKIQDYRSAYNDIRDWQRREKEAEKKEKSTTDWDDVVFEVDLLKSQEINLDYILGLIFEHNRQNKGKGEMIEEVKRLIRSSLGNRAKEGLVVDFIQQTNLDDLPDKASIIDAFFTFAQREQQREAEALIKEENLNEDAAKRYIRTSLKREYATENGTELNETLPKLSPLNPQYKTKKQAVFQKIVSFIEKFKGVGGKI</sequence>
<feature type="chain" id="PRO_0000077260" description="Type I restriction enzyme EcoR124I/EcoR124II endonuclease subunit">
    <location>
        <begin position="1"/>
        <end position="1038"/>
    </location>
</feature>
<feature type="domain" description="Helicase ATP-binding" evidence="1">
    <location>
        <begin position="294"/>
        <end position="439"/>
    </location>
</feature>
<feature type="region of interest" description="Nuclease domain" evidence="10">
    <location>
        <begin position="31"/>
        <end position="249"/>
    </location>
</feature>
<feature type="region of interest" description="Motor 1 domain" evidence="10">
    <location>
        <begin position="250"/>
        <end position="469"/>
    </location>
</feature>
<feature type="region of interest" description="Motor 2 domain" evidence="10">
    <location>
        <begin position="470"/>
        <end position="702"/>
    </location>
</feature>
<feature type="region of interest" description="Motor 2-helicase linker" evidence="10">
    <location>
        <begin position="720"/>
        <end position="732"/>
    </location>
</feature>
<feature type="region of interest" description="Helicase domain" evidence="10">
    <location>
        <begin position="732"/>
        <end position="860"/>
    </location>
</feature>
<feature type="region of interest" description="Helicase-CTD linker" evidence="10">
    <location>
        <begin position="859"/>
        <end position="886"/>
    </location>
</feature>
<feature type="region of interest" description="C-terminal domain" evidence="10">
    <location>
        <begin position="886"/>
        <end position="1038"/>
    </location>
</feature>
<feature type="short sequence motif" description="DEAH box" evidence="1">
    <location>
        <begin position="408"/>
        <end position="411"/>
    </location>
</feature>
<feature type="binding site" evidence="1">
    <location>
        <begin position="307"/>
        <end position="314"/>
    </location>
    <ligand>
        <name>ATP</name>
        <dbReference type="ChEBI" id="CHEBI:30616"/>
    </ligand>
</feature>
<feature type="mutagenesis site" description="Holoenzyme assembles, some impairment of restriction activity." evidence="5">
    <original>DLRNQG</original>
    <variation>ALRAAA</variation>
    <location>
        <begin position="43"/>
        <end position="48"/>
    </location>
</feature>
<feature type="mutagenesis site" description="Significantly decreased binding to M(2)S(1), loss of restriction activity." evidence="5">
    <original>DYICD</original>
    <variation>AAACA</variation>
    <location>
        <begin position="106"/>
        <end position="110"/>
    </location>
</feature>
<feature type="mutagenesis site" description="Loss of DNA restriction." evidence="5">
    <original>D</original>
    <variation>A</variation>
    <location>
        <position position="151"/>
    </location>
</feature>
<feature type="mutagenesis site" description="Holoenzyme assembles, loss of restriction activity." evidence="5">
    <original>FQKH</original>
    <variation>AAAA</variation>
    <location>
        <begin position="248"/>
        <end position="251"/>
    </location>
</feature>
<feature type="mutagenesis site" description="Holoenzyme assembly is impaired, some impairment of restriction activity." evidence="5">
    <original>KSSFT</original>
    <variation>AAAAA</variation>
    <location>
        <begin position="288"/>
        <end position="292"/>
    </location>
</feature>
<feature type="mutagenesis site" description="Loss of restriction activity." evidence="5">
    <location>
        <begin position="720"/>
        <end position="732"/>
    </location>
</feature>
<feature type="mutagenesis site" description="Loss of restriction activity." evidence="5">
    <location>
        <begin position="859"/>
        <end position="886"/>
    </location>
</feature>
<feature type="mutagenesis site" description="Significantly decreased binding to M(2)S(1), significantly decreased binding to Ocr, loss of restriction activity." evidence="5">
    <location>
        <begin position="887"/>
        <end position="1038"/>
    </location>
</feature>
<feature type="sequence conflict" description="In Ref. 1; CAA31543." evidence="9" ref="1">
    <original>QKIVSFIEKFKGVGGKI</original>
    <variation>RKSSRLLRSLKA</variation>
    <location>
        <begin position="1022"/>
        <end position="1038"/>
    </location>
</feature>
<feature type="helix" evidence="20">
    <location>
        <begin position="33"/>
        <end position="46"/>
    </location>
</feature>
<feature type="helix" evidence="20">
    <location>
        <begin position="57"/>
        <end position="72"/>
    </location>
</feature>
<feature type="helix" evidence="20">
    <location>
        <begin position="78"/>
        <end position="87"/>
    </location>
</feature>
<feature type="helix" evidence="20">
    <location>
        <begin position="96"/>
        <end position="104"/>
    </location>
</feature>
<feature type="strand" evidence="20">
    <location>
        <begin position="108"/>
        <end position="112"/>
    </location>
</feature>
<feature type="strand" evidence="20">
    <location>
        <begin position="118"/>
        <end position="124"/>
    </location>
</feature>
<feature type="strand" evidence="20">
    <location>
        <begin position="126"/>
        <end position="128"/>
    </location>
</feature>
<feature type="helix" evidence="20">
    <location>
        <begin position="129"/>
        <end position="131"/>
    </location>
</feature>
<feature type="strand" evidence="20">
    <location>
        <begin position="134"/>
        <end position="138"/>
    </location>
</feature>
<feature type="strand" evidence="19">
    <location>
        <begin position="143"/>
        <end position="145"/>
    </location>
</feature>
<feature type="strand" evidence="20">
    <location>
        <begin position="151"/>
        <end position="156"/>
    </location>
</feature>
<feature type="strand" evidence="20">
    <location>
        <begin position="159"/>
        <end position="166"/>
    </location>
</feature>
<feature type="helix" evidence="20">
    <location>
        <begin position="173"/>
        <end position="180"/>
    </location>
</feature>
<feature type="turn" evidence="20">
    <location>
        <begin position="190"/>
        <end position="192"/>
    </location>
</feature>
<feature type="helix" evidence="20">
    <location>
        <begin position="193"/>
        <end position="197"/>
    </location>
</feature>
<feature type="strand" evidence="20">
    <location>
        <begin position="200"/>
        <end position="204"/>
    </location>
</feature>
<feature type="strand" evidence="20">
    <location>
        <begin position="209"/>
        <end position="213"/>
    </location>
</feature>
<feature type="helix" evidence="20">
    <location>
        <begin position="218"/>
        <end position="220"/>
    </location>
</feature>
<feature type="helix" evidence="20">
    <location>
        <begin position="223"/>
        <end position="225"/>
    </location>
</feature>
<feature type="strand" evidence="20">
    <location>
        <begin position="227"/>
        <end position="230"/>
    </location>
</feature>
<feature type="helix" evidence="20">
    <location>
        <begin position="240"/>
        <end position="246"/>
    </location>
</feature>
<feature type="helix" evidence="20">
    <location>
        <begin position="250"/>
        <end position="258"/>
    </location>
</feature>
<feature type="strand" evidence="20">
    <location>
        <begin position="260"/>
        <end position="263"/>
    </location>
</feature>
<feature type="strand" evidence="20">
    <location>
        <begin position="269"/>
        <end position="271"/>
    </location>
</feature>
<feature type="helix" evidence="20">
    <location>
        <begin position="274"/>
        <end position="292"/>
    </location>
</feature>
<feature type="turn" evidence="20">
    <location>
        <begin position="299"/>
        <end position="301"/>
    </location>
</feature>
<feature type="strand" evidence="20">
    <location>
        <begin position="302"/>
        <end position="307"/>
    </location>
</feature>
<feature type="helix" evidence="20">
    <location>
        <begin position="313"/>
        <end position="324"/>
    </location>
</feature>
<feature type="strand" evidence="20">
    <location>
        <begin position="332"/>
        <end position="337"/>
    </location>
</feature>
<feature type="helix" evidence="20">
    <location>
        <begin position="339"/>
        <end position="341"/>
    </location>
</feature>
<feature type="helix" evidence="20">
    <location>
        <begin position="344"/>
        <end position="351"/>
    </location>
</feature>
<feature type="strand" evidence="20">
    <location>
        <begin position="359"/>
        <end position="361"/>
    </location>
</feature>
<feature type="helix" evidence="20">
    <location>
        <begin position="365"/>
        <end position="371"/>
    </location>
</feature>
<feature type="strand" evidence="20">
    <location>
        <begin position="378"/>
        <end position="382"/>
    </location>
</feature>
<feature type="helix" evidence="20">
    <location>
        <begin position="383"/>
        <end position="392"/>
    </location>
</feature>
<feature type="helix" evidence="20">
    <location>
        <begin position="397"/>
        <end position="400"/>
    </location>
</feature>
<feature type="strand" evidence="20">
    <location>
        <begin position="401"/>
        <end position="409"/>
    </location>
</feature>
<feature type="strand" evidence="20">
    <location>
        <begin position="412"/>
        <end position="414"/>
    </location>
</feature>
<feature type="helix" evidence="20">
    <location>
        <begin position="415"/>
        <end position="425"/>
    </location>
</feature>
<feature type="strand" evidence="20">
    <location>
        <begin position="427"/>
        <end position="437"/>
    </location>
</feature>
<feature type="helix" evidence="20">
    <location>
        <begin position="441"/>
        <end position="443"/>
    </location>
</feature>
<feature type="helix" evidence="20">
    <location>
        <begin position="450"/>
        <end position="454"/>
    </location>
</feature>
<feature type="strand" evidence="20">
    <location>
        <begin position="456"/>
        <end position="461"/>
    </location>
</feature>
<feature type="helix" evidence="20">
    <location>
        <begin position="463"/>
        <end position="468"/>
    </location>
</feature>
<feature type="strand" evidence="20">
    <location>
        <begin position="475"/>
        <end position="479"/>
    </location>
</feature>
<feature type="turn" evidence="20">
    <location>
        <begin position="484"/>
        <end position="486"/>
    </location>
</feature>
<feature type="helix" evidence="20">
    <location>
        <begin position="487"/>
        <end position="490"/>
    </location>
</feature>
<feature type="helix" evidence="20">
    <location>
        <begin position="495"/>
        <end position="500"/>
    </location>
</feature>
<feature type="turn" evidence="20">
    <location>
        <begin position="504"/>
        <end position="508"/>
    </location>
</feature>
<feature type="helix" evidence="20">
    <location>
        <begin position="510"/>
        <end position="527"/>
    </location>
</feature>
<feature type="strand" evidence="18">
    <location>
        <begin position="531"/>
        <end position="534"/>
    </location>
</feature>
<feature type="strand" evidence="20">
    <location>
        <begin position="539"/>
        <end position="546"/>
    </location>
</feature>
<feature type="helix" evidence="20">
    <location>
        <begin position="547"/>
        <end position="566"/>
    </location>
</feature>
<feature type="strand" evidence="18">
    <location>
        <begin position="568"/>
        <end position="570"/>
    </location>
</feature>
<feature type="strand" evidence="20">
    <location>
        <begin position="576"/>
        <end position="579"/>
    </location>
</feature>
<feature type="strand" evidence="20">
    <location>
        <begin position="586"/>
        <end position="589"/>
    </location>
</feature>
<feature type="strand" evidence="20">
    <location>
        <begin position="591"/>
        <end position="593"/>
    </location>
</feature>
<feature type="helix" evidence="20">
    <location>
        <begin position="601"/>
        <end position="603"/>
    </location>
</feature>
<feature type="helix" evidence="20">
    <location>
        <begin position="606"/>
        <end position="623"/>
    </location>
</feature>
<feature type="helix" evidence="20">
    <location>
        <begin position="631"/>
        <end position="646"/>
    </location>
</feature>
<feature type="strand" evidence="20">
    <location>
        <begin position="649"/>
        <end position="657"/>
    </location>
</feature>
<feature type="strand" evidence="20">
    <location>
        <begin position="660"/>
        <end position="662"/>
    </location>
</feature>
<feature type="strand" evidence="20">
    <location>
        <begin position="668"/>
        <end position="675"/>
    </location>
</feature>
<feature type="helix" evidence="20">
    <location>
        <begin position="679"/>
        <end position="686"/>
    </location>
</feature>
<feature type="helix" evidence="20">
    <location>
        <begin position="687"/>
        <end position="689"/>
    </location>
</feature>
<feature type="strand" evidence="20">
    <location>
        <begin position="699"/>
        <end position="706"/>
    </location>
</feature>
<feature type="helix" evidence="20">
    <location>
        <begin position="709"/>
        <end position="718"/>
    </location>
</feature>
<feature type="helix" evidence="20">
    <location>
        <begin position="724"/>
        <end position="728"/>
    </location>
</feature>
<feature type="helix" evidence="20">
    <location>
        <begin position="733"/>
        <end position="738"/>
    </location>
</feature>
<feature type="strand" evidence="19">
    <location>
        <begin position="739"/>
        <end position="741"/>
    </location>
</feature>
<feature type="turn" evidence="20">
    <location>
        <begin position="743"/>
        <end position="745"/>
    </location>
</feature>
<feature type="strand" evidence="19">
    <location>
        <begin position="748"/>
        <end position="750"/>
    </location>
</feature>
<feature type="helix" evidence="20">
    <location>
        <begin position="752"/>
        <end position="762"/>
    </location>
</feature>
<feature type="strand" evidence="18">
    <location>
        <begin position="766"/>
        <end position="769"/>
    </location>
</feature>
<feature type="helix" evidence="20">
    <location>
        <begin position="772"/>
        <end position="792"/>
    </location>
</feature>
<feature type="helix" evidence="20">
    <location>
        <begin position="796"/>
        <end position="804"/>
    </location>
</feature>
<feature type="strand" evidence="20">
    <location>
        <begin position="811"/>
        <end position="813"/>
    </location>
</feature>
<feature type="helix" evidence="20">
    <location>
        <begin position="818"/>
        <end position="821"/>
    </location>
</feature>
<feature type="helix" evidence="20">
    <location>
        <begin position="826"/>
        <end position="832"/>
    </location>
</feature>
<feature type="helix" evidence="20">
    <location>
        <begin position="840"/>
        <end position="852"/>
    </location>
</feature>
<feature type="helix" evidence="20">
    <location>
        <begin position="880"/>
        <end position="883"/>
    </location>
</feature>
<feature type="strand" evidence="20">
    <location>
        <begin position="884"/>
        <end position="886"/>
    </location>
</feature>
<feature type="helix" evidence="21">
    <location>
        <begin position="887"/>
        <end position="899"/>
    </location>
</feature>
<feature type="helix" evidence="21">
    <location>
        <begin position="909"/>
        <end position="920"/>
    </location>
</feature>
<feature type="strand" evidence="21">
    <location>
        <begin position="921"/>
        <end position="923"/>
    </location>
</feature>
<feature type="helix" evidence="21">
    <location>
        <begin position="925"/>
        <end position="927"/>
    </location>
</feature>
<feature type="helix" evidence="21">
    <location>
        <begin position="928"/>
        <end position="936"/>
    </location>
</feature>
<feature type="turn" evidence="21">
    <location>
        <begin position="940"/>
        <end position="942"/>
    </location>
</feature>
<feature type="helix" evidence="21">
    <location>
        <begin position="946"/>
        <end position="971"/>
    </location>
</feature>
<feature type="helix" evidence="21">
    <location>
        <begin position="976"/>
        <end position="989"/>
    </location>
</feature>
<feature type="turn" evidence="21">
    <location>
        <begin position="996"/>
        <end position="999"/>
    </location>
</feature>
<feature type="helix" evidence="21">
    <location>
        <begin position="1000"/>
        <end position="1002"/>
    </location>
</feature>
<feature type="strand" evidence="21">
    <location>
        <begin position="1012"/>
        <end position="1014"/>
    </location>
</feature>
<feature type="helix" evidence="21">
    <location>
        <begin position="1016"/>
        <end position="1031"/>
    </location>
</feature>
<name>T1R1_ECOLX</name>
<reference evidence="12" key="1">
    <citation type="journal article" date="1989" name="J. Mol. Biol.">
        <title>Basis for changes in DNA recognition by the EcoR124 and EcoR124/3 type I DNA restriction and modification enzymes.</title>
        <authorList>
            <person name="Price C."/>
            <person name="Lingner J."/>
            <person name="Bickle J."/>
            <person name="Firman T.A."/>
            <person name="Glover S.W."/>
        </authorList>
    </citation>
    <scope>NUCLEOTIDE SEQUENCE [GENOMIC DNA]</scope>
    <scope>FUNCTION</scope>
    <scope>DNA RECOGNITION SITE</scope>
    <source>
        <plasmid>IncFIV R124/3</plasmid>
    </source>
</reference>
<reference evidence="11" key="2">
    <citation type="journal article" date="2008" name="J. Mol. Biol.">
        <title>HsdR subunit of the type I restriction-modification enzyme EcoR124I: biophysical characterisation and structural modelling.</title>
        <authorList>
            <person name="Obarska-Kosinska A."/>
            <person name="Taylor J.E."/>
            <person name="Callow P."/>
            <person name="Orlowski J."/>
            <person name="Bujnicki J.M."/>
            <person name="Kneale G.G."/>
        </authorList>
    </citation>
    <scope>NUCLEOTIDE SEQUENCE [GENOMIC DNA]</scope>
    <scope>SEQUENCE REVISION TO C-TERMINUS</scope>
    <scope>SUBUNIT</scope>
    <source>
        <strain>EcoR124I</strain>
        <plasmid>IncFIV R124/3</plasmid>
    </source>
</reference>
<reference key="3">
    <citation type="journal article" date="2004" name="Nat. Struct. Mol. Biol.">
        <title>Real-time observation of DNA translocation by the type I restriction modification enzyme EcoR124I.</title>
        <authorList>
            <person name="Seidel R."/>
            <person name="van Noort J."/>
            <person name="van der Scheer C."/>
            <person name="Bloom J.G."/>
            <person name="Dekker N.H."/>
            <person name="Dutta C.F."/>
            <person name="Blundell A."/>
            <person name="Robinson T."/>
            <person name="Firman K."/>
            <person name="Dekker C."/>
        </authorList>
    </citation>
    <scope>FUNCTION</scope>
    <scope>BIOPHYSICOCHEMICAL PROPERTIES</scope>
    <scope>SUBUNIT</scope>
</reference>
<reference key="4">
    <citation type="journal article" date="2003" name="Nucleic Acids Res.">
        <title>A nomenclature for restriction enzymes, DNA methyltransferases, homing endonucleases and their genes.</title>
        <authorList>
            <person name="Roberts R.J."/>
            <person name="Belfort M."/>
            <person name="Bestor T."/>
            <person name="Bhagwat A.S."/>
            <person name="Bickle T.A."/>
            <person name="Bitinaite J."/>
            <person name="Blumenthal R.M."/>
            <person name="Degtyarev S.K."/>
            <person name="Dryden D.T."/>
            <person name="Dybvig K."/>
            <person name="Firman K."/>
            <person name="Gromova E.S."/>
            <person name="Gumport R.I."/>
            <person name="Halford S.E."/>
            <person name="Hattman S."/>
            <person name="Heitman J."/>
            <person name="Hornby D.P."/>
            <person name="Janulaitis A."/>
            <person name="Jeltsch A."/>
            <person name="Josephsen J."/>
            <person name="Kiss A."/>
            <person name="Klaenhammer T.R."/>
            <person name="Kobayashi I."/>
            <person name="Kong H."/>
            <person name="Krueger D.H."/>
            <person name="Lacks S."/>
            <person name="Marinus M.G."/>
            <person name="Miyahara M."/>
            <person name="Morgan R.D."/>
            <person name="Murray N.E."/>
            <person name="Nagaraja V."/>
            <person name="Piekarowicz A."/>
            <person name="Pingoud A."/>
            <person name="Raleigh E."/>
            <person name="Rao D.N."/>
            <person name="Reich N."/>
            <person name="Repin V.E."/>
            <person name="Selker E.U."/>
            <person name="Shaw P.C."/>
            <person name="Stein D.C."/>
            <person name="Stoddard B.L."/>
            <person name="Szybalski W."/>
            <person name="Trautner T.A."/>
            <person name="Van Etten J.L."/>
            <person name="Vitor J.M."/>
            <person name="Wilson G.G."/>
            <person name="Xu S.Y."/>
        </authorList>
    </citation>
    <scope>NOMENCLATURE</scope>
</reference>
<reference evidence="13 14 15 16 17" key="5">
    <citation type="journal article" date="2020" name="Nat. Microbiol.">
        <title>Structural insights into assembly, operation and inhibition of a type I restriction-modification system.</title>
        <authorList>
            <person name="Gao Y."/>
            <person name="Cao D."/>
            <person name="Zhu J."/>
            <person name="Feng H."/>
            <person name="Luo X."/>
            <person name="Liu S."/>
            <person name="Yan X.X."/>
            <person name="Zhang X."/>
            <person name="Gao P."/>
        </authorList>
    </citation>
    <scope>STRUCTURE BY ELECTRON MICROSCOPY (3.97 ANGSTROMS) OF 1-1038 IN COMPLEX WITH M AND S SUBUNITS AND WITH ESCHERICHIA PHAGE T7 PROTEIN OCR</scope>
    <scope>FUNCTION</scope>
    <scope>CATALYTIC ACTIVITY</scope>
    <scope>INTERACTION WITH ESCHERICHIA PHAGE T7 PROTEIN OCR (MICROBIAL INFECTION)</scope>
    <scope>DOMAIN</scope>
    <scope>DNA-BINDING</scope>
    <scope>MUTAGENESIS OF 43-ASP--GLY-48; 106-ASP--ASP-110; ASP-151; 248-PHE--HIS-251; 288-LYS--THR-292; 720-GLY--SER-732; 859-ARG--GLN-886 AND 887-GLU--ALA-1038</scope>
</reference>
<geneLocation type="plasmid">
    <name>IncFIV R124/3</name>
</geneLocation>
<accession>P10486</accession>
<accession>Q304R3</accession>
<evidence type="ECO:0000255" key="1">
    <source>
        <dbReference type="PROSITE-ProRule" id="PRU00541"/>
    </source>
</evidence>
<evidence type="ECO:0000269" key="2">
    <source>
    </source>
</evidence>
<evidence type="ECO:0000269" key="3">
    <source>
    </source>
</evidence>
<evidence type="ECO:0000269" key="4">
    <source>
    </source>
</evidence>
<evidence type="ECO:0000269" key="5">
    <source>
    </source>
</evidence>
<evidence type="ECO:0000303" key="6">
    <source>
    </source>
</evidence>
<evidence type="ECO:0000303" key="7">
    <source>
    </source>
</evidence>
<evidence type="ECO:0000303" key="8">
    <source>
    </source>
</evidence>
<evidence type="ECO:0000305" key="9"/>
<evidence type="ECO:0000305" key="10">
    <source>
    </source>
</evidence>
<evidence type="ECO:0000312" key="11">
    <source>
        <dbReference type="EMBL" id="ABB51560.1"/>
    </source>
</evidence>
<evidence type="ECO:0000312" key="12">
    <source>
        <dbReference type="EMBL" id="CAA31543.1"/>
    </source>
</evidence>
<evidence type="ECO:0007744" key="13">
    <source>
        <dbReference type="PDB" id="7BST"/>
    </source>
</evidence>
<evidence type="ECO:0007744" key="14">
    <source>
        <dbReference type="PDB" id="7BTO"/>
    </source>
</evidence>
<evidence type="ECO:0007744" key="15">
    <source>
        <dbReference type="PDB" id="7BTP"/>
    </source>
</evidence>
<evidence type="ECO:0007744" key="16">
    <source>
        <dbReference type="PDB" id="7BTQ"/>
    </source>
</evidence>
<evidence type="ECO:0007744" key="17">
    <source>
        <dbReference type="PDB" id="7BTR"/>
    </source>
</evidence>
<evidence type="ECO:0007829" key="18">
    <source>
        <dbReference type="PDB" id="2W00"/>
    </source>
</evidence>
<evidence type="ECO:0007829" key="19">
    <source>
        <dbReference type="PDB" id="4BEB"/>
    </source>
</evidence>
<evidence type="ECO:0007829" key="20">
    <source>
        <dbReference type="PDB" id="4XJX"/>
    </source>
</evidence>
<evidence type="ECO:0007829" key="21">
    <source>
        <dbReference type="PDB" id="5J3N"/>
    </source>
</evidence>
<protein>
    <recommendedName>
        <fullName evidence="6">Type I restriction enzyme EcoR124I/EcoR124II endonuclease subunit</fullName>
        <shortName evidence="6">EcoR124I/EcoR124II</shortName>
        <shortName>R protein</shortName>
        <ecNumber evidence="5">3.1.21.3</ecNumber>
    </recommendedName>
    <alternativeName>
        <fullName evidence="8">Type I restriction enzyme EcoR124/EcoR124/3 endonuclease subunit</fullName>
    </alternativeName>
    <alternativeName>
        <fullName evidence="7">Type I restriction-modification enzyme EcoR124I/EcoR124II HsdR endonuclease subunit</fullName>
        <shortName evidence="7">HsdR</shortName>
    </alternativeName>
</protein>
<comment type="function">
    <text evidence="2 4 5 6 10">The restriction (R) subunit of a type I restriction enzyme that recognizes 5'-GAAN(6)RTCG-3' (for EcoR124I) and 5'-GAAN(7)RTCG-3' (for EcoR124II) and cleaves a random distance away (PubMed:2784505). Subunit R is required for both nuclease and ATPase activities, but not for modification (Probable) (PubMed:12654995). After locating an unmethylated recognition site, the enzyme complex serves as a molecular motor that translocates DNA in an ATP-dependent manner until a collision occurs that triggers cleavage (PubMed:15300241). The enzyme undergoes major structural changes to bring the motor domains into contact with DNA, allowing DNA translocation. This prevents DNA access to the catalytic domains of both the R and M subunits, preventing both restriction and methylation (PubMed:32483229). The R(1)M(2)S(1) complex translocates an average of 555 bp/second on nicked DNA; the R(2)M(2)S(1) complex translocates at double that speed (PubMed:15300241). The 2 R subunit motors are independent and track along the helical pitch of the DNA, inducing positive supercoiling ahead of themselves (PubMed:15300241).</text>
</comment>
<comment type="catalytic activity">
    <reaction evidence="5">
        <text>Endonucleolytic cleavage of DNA to give random double-stranded fragments with terminal 5'-phosphates, ATP is simultaneously hydrolyzed.</text>
        <dbReference type="EC" id="3.1.21.3"/>
    </reaction>
</comment>
<comment type="biophysicochemical properties">
    <kinetics>
        <KM evidence="2">88 uM for ATP</KM>
    </kinetics>
</comment>
<comment type="subunit">
    <text evidence="2 3 5">A monomer in solution (PubMed:18164032). The type I restriction/modification system is composed of three polypeptides R, M and S; the restriction enzyme has stoichiometry R(2)M(2)S(1) while the methyltransferase is M(2)S(1). There is an equilibrium between R(2)M(2)S(1) and R(1)M(2)S(1); the latter is methylation and translocation proficient but restriction deficient (PubMed:15300241).</text>
</comment>
<comment type="subunit">
    <text evidence="5">(Microbial infection) Holoenenzyme interacts with Escherichia phage T7 protein Ocr; this interaction leads to the inhibition of the restriction activity, but may still allow methylation and translocation.</text>
</comment>
<comment type="domain">
    <text evidence="5">The individual domains assume different positions in the enzyme, allowing the holoenzyme to regulate the methylase, endonuclease and translocation states. Deletion of the linkers between the domains prevents movement and thus restriction activity.</text>
</comment>
<comment type="miscellaneous">
    <text evidence="5">Type I restriction and modification enzymes are complex, multifunctional systems which require ATP, S-adenosyl methionine and magnesium as cofactors and, in addition to their endonucleolytic and methylase activities, are potent DNA-dependent ATPases.</text>
</comment>
<comment type="similarity">
    <text evidence="9">Belongs to the HsdR family.</text>
</comment>
<keyword id="KW-0002">3D-structure</keyword>
<keyword id="KW-0067">ATP-binding</keyword>
<keyword id="KW-0238">DNA-binding</keyword>
<keyword id="KW-0255">Endonuclease</keyword>
<keyword id="KW-0378">Hydrolase</keyword>
<keyword id="KW-0540">Nuclease</keyword>
<keyword id="KW-0547">Nucleotide-binding</keyword>
<keyword id="KW-0614">Plasmid</keyword>
<keyword id="KW-0680">Restriction system</keyword>
<organism>
    <name type="scientific">Escherichia coli</name>
    <dbReference type="NCBI Taxonomy" id="562"/>
    <lineage>
        <taxon>Bacteria</taxon>
        <taxon>Pseudomonadati</taxon>
        <taxon>Pseudomonadota</taxon>
        <taxon>Gammaproteobacteria</taxon>
        <taxon>Enterobacterales</taxon>
        <taxon>Enterobacteriaceae</taxon>
        <taxon>Escherichia</taxon>
    </lineage>
</organism>